<protein>
    <recommendedName>
        <fullName evidence="1">Initiator protein NS1</fullName>
        <shortName>NS1</shortName>
        <ecNumber evidence="2">3.1.21.-</ecNumber>
        <ecNumber evidence="2">3.6.4.12</ecNumber>
    </recommendedName>
    <alternativeName>
        <fullName>Non-structural protein 1</fullName>
    </alternativeName>
    <alternativeName>
        <fullName>Non-structural protein NS1</fullName>
    </alternativeName>
</protein>
<evidence type="ECO:0000250" key="1">
    <source>
        <dbReference type="UniProtKB" id="P03134"/>
    </source>
</evidence>
<evidence type="ECO:0000250" key="2">
    <source>
        <dbReference type="UniProtKB" id="Q9PZT1"/>
    </source>
</evidence>
<evidence type="ECO:0000255" key="3">
    <source>
        <dbReference type="PROSITE-ProRule" id="PRU00551"/>
    </source>
</evidence>
<evidence type="ECO:0000255" key="4">
    <source>
        <dbReference type="PROSITE-ProRule" id="PRU01366"/>
    </source>
</evidence>
<evidence type="ECO:0000269" key="5">
    <source>
    </source>
</evidence>
<evidence type="ECO:0000305" key="6"/>
<feature type="chain" id="PRO_0000222461" description="Initiator protein NS1">
    <location>
        <begin position="1"/>
        <end position="590"/>
    </location>
</feature>
<feature type="domain" description="PV NS1-Nuc" evidence="4">
    <location>
        <begin position="33"/>
        <end position="263"/>
    </location>
</feature>
<feature type="domain" description="SF3 helicase" evidence="3">
    <location>
        <begin position="405"/>
        <end position="560"/>
    </location>
</feature>
<feature type="short sequence motif" description="RCR-2" evidence="4">
    <location>
        <begin position="125"/>
        <end position="127"/>
    </location>
</feature>
<feature type="short sequence motif" description="RCR-3" evidence="4">
    <location>
        <begin position="217"/>
        <end position="221"/>
    </location>
</feature>
<feature type="active site" description="For nuclease activity" evidence="4">
    <location>
        <position position="217"/>
    </location>
</feature>
<feature type="binding site" evidence="4">
    <location>
        <position position="117"/>
    </location>
    <ligand>
        <name>a divalent metal cation</name>
        <dbReference type="ChEBI" id="CHEBI:60240"/>
    </ligand>
</feature>
<feature type="binding site" evidence="4">
    <location>
        <position position="125"/>
    </location>
    <ligand>
        <name>a divalent metal cation</name>
        <dbReference type="ChEBI" id="CHEBI:60240"/>
    </ligand>
</feature>
<feature type="binding site" evidence="4">
    <location>
        <position position="127"/>
    </location>
    <ligand>
        <name>a divalent metal cation</name>
        <dbReference type="ChEBI" id="CHEBI:60240"/>
    </ligand>
</feature>
<feature type="binding site" evidence="3">
    <location>
        <begin position="432"/>
        <end position="439"/>
    </location>
    <ligand>
        <name>ATP</name>
        <dbReference type="ChEBI" id="CHEBI:30616"/>
    </ligand>
</feature>
<feature type="site" description="Cleavage; by host caspase-3">
    <location>
        <begin position="227"/>
        <end position="228"/>
    </location>
</feature>
<feature type="site" description="Cleavage; by host caspase-3">
    <location>
        <begin position="285"/>
        <end position="286"/>
    </location>
</feature>
<feature type="mutagenesis site" description="Complete loss of viral replication competency, when associated with E-285." evidence="5">
    <original>D</original>
    <variation>E</variation>
    <location>
        <position position="227"/>
    </location>
</feature>
<feature type="mutagenesis site" description="More than 99% loss of viral replication efficiency." evidence="5">
    <original>D</original>
    <variation>E</variation>
    <location>
        <position position="227"/>
    </location>
</feature>
<feature type="mutagenesis site" description="Complete loss of viral replication efficiency, when associated with E-227." evidence="5">
    <original>D</original>
    <variation>E</variation>
    <location>
        <position position="285"/>
    </location>
</feature>
<feature type="mutagenesis site" description="More than 99% loss of viral replication efficiency." evidence="5">
    <original>D</original>
    <variation>E</variation>
    <location>
        <position position="285"/>
    </location>
</feature>
<organismHost>
    <name type="scientific">Mustela</name>
    <dbReference type="NCBI Taxonomy" id="9665"/>
</organismHost>
<sequence length="590" mass="67364">MAQAQIDEQRRLQDLYVQLKKEINDGEGVAWLFQQKTYTDKDNKPTKATPPLRTTSSDLRLAFDSIEENLTASNEHLTNNEINFCKLTLGKTLLLIDKHVKSHRWDSNKVNLIWQIEKGKTQQFHIHCCLGYFDKNEDPKDVQKSLGWFMKRLNKDLAVIYSNHHCDIQDIKDPEDRAKNLKVWIEDGPTKPYKYFNKQTKQDYNKPVHLRDYTFIYLFNKDKINTDSMDGYFAAGNGGIVDNLTNKERKTLRKMYLDEQSSDIMDANIDWEDGQDAPKVTDQTDSATTKTGTSLIWKSCATKVTSKKEVANPVQQPSKKLYSAQSTLDALFNVGCFTPEDMIIKQSDKYLELSLEPNGPQKINTLLHMNQVKTSTMITAFDCIIKFNEEEDDKPLLATIKDMGLNEQYLKKVLCTILTKQGGKRGCIWFYGPGGTGKTLLASLICKATVNYGMVTTSNPNFPWTDCGNRNIIWAEECGNFGNWVEDFKAITGGGDVKVDTKNKQPQSIKGCVIVTSNTNITKVTVGCVETNAHAEPLKQRMIKIRCMKTINPKTKITPGMLKRWLNTWDRQPIQLSHEMPELYLGKCRW</sequence>
<gene>
    <name type="primary">NS1</name>
</gene>
<reference key="1">
    <citation type="journal article" date="1988" name="J. Virol.">
        <title>Nucleotide sequence and genomic organization of Aleutian mink disease parvovirus (ADV): sequence comparisons between a nonpathogenic and a pathogenic strain of ADV.</title>
        <authorList>
            <person name="Bloom M.E."/>
            <person name="Alexandersen S."/>
            <person name="Perryman S."/>
            <person name="Lechner D."/>
            <person name="Wolfinbarger J.B."/>
        </authorList>
    </citation>
    <scope>NUCLEOTIDE SEQUENCE [GENOMIC DNA]</scope>
</reference>
<reference key="2">
    <citation type="journal article" date="2003" name="J. Virol.">
        <title>Caspase cleavage of the nonstructural protein NS1 mediates replication of Aleutian mink disease parvovirus.</title>
        <authorList>
            <person name="Best S.M."/>
            <person name="Shelton J.F."/>
            <person name="Pompey J.M."/>
            <person name="Wolfinbarger J.B."/>
            <person name="Bloom M.E."/>
        </authorList>
    </citation>
    <scope>SUBCELLULAR LOCATION</scope>
    <scope>MUTAGENESIS OF ASP-227 AND ASP-285</scope>
</reference>
<organism>
    <name type="scientific">Aleutian mink disease parvovirus (strain G)</name>
    <name type="common">ADV</name>
    <dbReference type="NCBI Taxonomy" id="10783"/>
    <lineage>
        <taxon>Viruses</taxon>
        <taxon>Monodnaviria</taxon>
        <taxon>Shotokuvirae</taxon>
        <taxon>Cossaviricota</taxon>
        <taxon>Quintoviricetes</taxon>
        <taxon>Piccovirales</taxon>
        <taxon>Parvoviridae</taxon>
        <taxon>Parvovirinae</taxon>
        <taxon>Amdoparvovirus</taxon>
        <taxon>Amdoparvovirus carnivoran1</taxon>
    </lineage>
</organism>
<dbReference type="EC" id="3.1.21.-" evidence="2"/>
<dbReference type="EC" id="3.6.4.12" evidence="2"/>
<dbReference type="EMBL" id="M20036">
    <property type="protein sequence ID" value="AAA66612.1"/>
    <property type="molecule type" value="Genomic_DNA"/>
</dbReference>
<dbReference type="PIR" id="A36760">
    <property type="entry name" value="UYPVAP"/>
</dbReference>
<dbReference type="RefSeq" id="NP_042872.1">
    <property type="nucleotide sequence ID" value="NC_001662.1"/>
</dbReference>
<dbReference type="KEGG" id="vg:1494586"/>
<dbReference type="Proteomes" id="UP000008470">
    <property type="component" value="Segment"/>
</dbReference>
<dbReference type="GO" id="GO:0019034">
    <property type="term" value="C:viral replication complex"/>
    <property type="evidence" value="ECO:0000314"/>
    <property type="project" value="CACAO"/>
</dbReference>
<dbReference type="GO" id="GO:0005524">
    <property type="term" value="F:ATP binding"/>
    <property type="evidence" value="ECO:0007669"/>
    <property type="project" value="UniProtKB-KW"/>
</dbReference>
<dbReference type="GO" id="GO:0016887">
    <property type="term" value="F:ATP hydrolysis activity"/>
    <property type="evidence" value="ECO:0007669"/>
    <property type="project" value="RHEA"/>
</dbReference>
<dbReference type="GO" id="GO:0003677">
    <property type="term" value="F:DNA binding"/>
    <property type="evidence" value="ECO:0007669"/>
    <property type="project" value="UniProtKB-KW"/>
</dbReference>
<dbReference type="GO" id="GO:0004519">
    <property type="term" value="F:endonuclease activity"/>
    <property type="evidence" value="ECO:0007669"/>
    <property type="project" value="UniProtKB-KW"/>
</dbReference>
<dbReference type="GO" id="GO:0004386">
    <property type="term" value="F:helicase activity"/>
    <property type="evidence" value="ECO:0007669"/>
    <property type="project" value="UniProtKB-KW"/>
</dbReference>
<dbReference type="GO" id="GO:0046872">
    <property type="term" value="F:metal ion binding"/>
    <property type="evidence" value="ECO:0007669"/>
    <property type="project" value="UniProtKB-KW"/>
</dbReference>
<dbReference type="GO" id="GO:0006260">
    <property type="term" value="P:DNA replication"/>
    <property type="evidence" value="ECO:0007669"/>
    <property type="project" value="UniProtKB-KW"/>
</dbReference>
<dbReference type="GO" id="GO:0039693">
    <property type="term" value="P:viral DNA genome replication"/>
    <property type="evidence" value="ECO:0007669"/>
    <property type="project" value="UniProtKB-KW"/>
</dbReference>
<dbReference type="Gene3D" id="3.40.50.300">
    <property type="entry name" value="P-loop containing nucleotide triphosphate hydrolases"/>
    <property type="match status" value="1"/>
</dbReference>
<dbReference type="InterPro" id="IPR020960">
    <property type="entry name" value="ADV_NS1-3"/>
</dbReference>
<dbReference type="InterPro" id="IPR014015">
    <property type="entry name" value="Helicase_SF3_DNA-vir"/>
</dbReference>
<dbReference type="InterPro" id="IPR027417">
    <property type="entry name" value="P-loop_NTPase"/>
</dbReference>
<dbReference type="InterPro" id="IPR001257">
    <property type="entry name" value="Parvovirus_NS1_helicase"/>
</dbReference>
<dbReference type="InterPro" id="IPR021076">
    <property type="entry name" value="Parvovirus_NS1_N"/>
</dbReference>
<dbReference type="InterPro" id="IPR049901">
    <property type="entry name" value="PV_NS1-NUC"/>
</dbReference>
<dbReference type="Pfam" id="PF12475">
    <property type="entry name" value="Amdo_NSP_1-3"/>
    <property type="match status" value="2"/>
</dbReference>
<dbReference type="Pfam" id="PF01057">
    <property type="entry name" value="Parvo_NS1"/>
    <property type="match status" value="1"/>
</dbReference>
<dbReference type="Pfam" id="PF12433">
    <property type="entry name" value="PV_NSP1"/>
    <property type="match status" value="1"/>
</dbReference>
<dbReference type="SUPFAM" id="SSF52540">
    <property type="entry name" value="P-loop containing nucleoside triphosphate hydrolases"/>
    <property type="match status" value="1"/>
</dbReference>
<dbReference type="PROSITE" id="PS52022">
    <property type="entry name" value="PV_NS1_NUC"/>
    <property type="match status" value="1"/>
</dbReference>
<dbReference type="PROSITE" id="PS51206">
    <property type="entry name" value="SF3_HELICASE_1"/>
    <property type="match status" value="1"/>
</dbReference>
<proteinExistence type="evidence at protein level"/>
<comment type="function">
    <text evidence="1">Multifunctional protein which displays endonuclease and helicase activities required for initiating and directing viral DNA replication. Also plays a role in viral packaging and transactivation of several promoters. Binds site-specifically to 2-3 approximate tandem copies within the origins of replication (Ori), unwinds this hairpin region and nicks one DNA strand thereby initiating the rolling circle replication (RCR).</text>
</comment>
<comment type="catalytic activity">
    <reaction evidence="1">
        <text>ATP + H2O = ADP + phosphate + H(+)</text>
        <dbReference type="Rhea" id="RHEA:13065"/>
        <dbReference type="ChEBI" id="CHEBI:15377"/>
        <dbReference type="ChEBI" id="CHEBI:15378"/>
        <dbReference type="ChEBI" id="CHEBI:30616"/>
        <dbReference type="ChEBI" id="CHEBI:43474"/>
        <dbReference type="ChEBI" id="CHEBI:456216"/>
        <dbReference type="EC" id="3.6.4.12"/>
    </reaction>
</comment>
<comment type="cofactor">
    <cofactor evidence="1">
        <name>Mg(2+)</name>
        <dbReference type="ChEBI" id="CHEBI:18420"/>
    </cofactor>
    <text evidence="1">The endonuclease active site can probably bind other divalent cations.</text>
</comment>
<comment type="subunit">
    <text evidence="1">Homooligomer.</text>
</comment>
<comment type="subcellular location">
    <subcellularLocation>
        <location evidence="5">Host nucleus</location>
    </subcellularLocation>
</comment>
<comment type="domain">
    <text evidence="1 2">In the N-terminus, the endonuclease region is involved in binding to the origin of replication. In the middle, there are the ATPase and helicase activities (By similarity). The C-terminus probably contains a transactivation domain (By similarity).</text>
</comment>
<comment type="similarity">
    <text evidence="6">Belongs to the parvoviruses initiator protein NS1 family.</text>
</comment>
<accession>P24030</accession>
<name>NS1_ADVG</name>
<keyword id="KW-0067">ATP-binding</keyword>
<keyword id="KW-0190">Covalent protein-DNA linkage</keyword>
<keyword id="KW-0235">DNA replication</keyword>
<keyword id="KW-0238">DNA-binding</keyword>
<keyword id="KW-0255">Endonuclease</keyword>
<keyword id="KW-0347">Helicase</keyword>
<keyword id="KW-1048">Host nucleus</keyword>
<keyword id="KW-0378">Hydrolase</keyword>
<keyword id="KW-0460">Magnesium</keyword>
<keyword id="KW-0479">Metal-binding</keyword>
<keyword id="KW-0540">Nuclease</keyword>
<keyword id="KW-0547">Nucleotide-binding</keyword>
<keyword id="KW-1185">Reference proteome</keyword>
<keyword id="KW-0804">Transcription</keyword>
<keyword id="KW-0805">Transcription regulation</keyword>
<keyword id="KW-1194">Viral DNA replication</keyword>
<keyword id="KW-0231">Viral genome packaging</keyword>
<keyword id="KW-1188">Viral release from host cell</keyword>